<dbReference type="EMBL" id="AB195303">
    <property type="protein sequence ID" value="BAD98710.1"/>
    <property type="molecule type" value="Genomic_DNA"/>
</dbReference>
<dbReference type="Proteomes" id="UP000504640">
    <property type="component" value="Unplaced"/>
</dbReference>
<dbReference type="GO" id="GO:0005829">
    <property type="term" value="C:cytosol"/>
    <property type="evidence" value="ECO:0007669"/>
    <property type="project" value="UniProtKB-ARBA"/>
</dbReference>
<dbReference type="GO" id="GO:0005882">
    <property type="term" value="C:intermediate filament"/>
    <property type="evidence" value="ECO:0007669"/>
    <property type="project" value="UniProtKB-KW"/>
</dbReference>
<dbReference type="InterPro" id="IPR007951">
    <property type="entry name" value="KRTAP_PMG"/>
</dbReference>
<dbReference type="InterPro" id="IPR001368">
    <property type="entry name" value="TNFR/NGFR_Cys_rich_reg"/>
</dbReference>
<dbReference type="Pfam" id="PF05287">
    <property type="entry name" value="PMG"/>
    <property type="match status" value="1"/>
</dbReference>
<keyword id="KW-0416">Keratin</keyword>
<keyword id="KW-1185">Reference proteome</keyword>
<keyword id="KW-0677">Repeat</keyword>
<sequence length="156" mass="17278">MSYNCCSGNFSSRSFGGYLHYPGCNPYSTALCSPSICQLGSSLYRNCQKTCWEPTSCRKSCYRRRTSMLCSPCQTTCSRSLGFGSSSCHSQGYGSRSCYSLGSGSSGFRFLKYGGCGFPSLSYGSRFCYPNYLASRAWQSSCYRPICGSRFYQFTC</sequence>
<evidence type="ECO:0000305" key="1"/>
<comment type="function">
    <text>In the hair cortex, hair keratin intermediate filaments are embedded in an interfilamentous matrix, consisting of hair keratin-associated proteins (KRTAP), which are essential for the formation of a rigid and resistant hair shaft through their extensive disulfide bond cross-linking with abundant cysteine residues of hair keratins. The matrix proteins include the high-sulfur and high-glycine-tyrosine keratins.</text>
</comment>
<comment type="subunit">
    <text>Interacts with hair keratins.</text>
</comment>
<comment type="similarity">
    <text evidence="1">Belongs to the PMG family.</text>
</comment>
<reference key="1">
    <citation type="submission" date="2004-11" db="EMBL/GenBank/DDBJ databases">
        <title>Comparative analysis of KAP13.3 and KAP13.4 genes in primates.</title>
        <authorList>
            <person name="Kim H."/>
            <person name="Park E."/>
        </authorList>
    </citation>
    <scope>NUCLEOTIDE SEQUENCE [GENOMIC DNA]</scope>
</reference>
<organism>
    <name type="scientific">Sapajus apella</name>
    <name type="common">Brown-capped capuchin</name>
    <name type="synonym">Cebus apella</name>
    <dbReference type="NCBI Taxonomy" id="9515"/>
    <lineage>
        <taxon>Eukaryota</taxon>
        <taxon>Metazoa</taxon>
        <taxon>Chordata</taxon>
        <taxon>Craniata</taxon>
        <taxon>Vertebrata</taxon>
        <taxon>Euteleostomi</taxon>
        <taxon>Mammalia</taxon>
        <taxon>Eutheria</taxon>
        <taxon>Euarchontoglires</taxon>
        <taxon>Primates</taxon>
        <taxon>Haplorrhini</taxon>
        <taxon>Platyrrhini</taxon>
        <taxon>Cebidae</taxon>
        <taxon>Cebinae</taxon>
        <taxon>Sapajus</taxon>
    </lineage>
</organism>
<feature type="chain" id="PRO_0000185203" description="Keratin-associated protein 13-4">
    <location>
        <begin position="1"/>
        <end position="156"/>
    </location>
</feature>
<feature type="repeat" description="1">
    <location>
        <begin position="37"/>
        <end position="46"/>
    </location>
</feature>
<feature type="repeat" description="2">
    <location>
        <begin position="47"/>
        <end position="56"/>
    </location>
</feature>
<feature type="repeat" description="3">
    <location>
        <begin position="57"/>
        <end position="66"/>
    </location>
</feature>
<feature type="repeat" description="4">
    <location>
        <begin position="73"/>
        <end position="82"/>
    </location>
</feature>
<feature type="region of interest" description="4 X 10 AA approximate repeats">
    <location>
        <begin position="37"/>
        <end position="82"/>
    </location>
</feature>
<proteinExistence type="inferred from homology"/>
<name>KR134_SAPAP</name>
<gene>
    <name type="primary">KRTAP13-4</name>
    <name type="synonym">KAP13.4</name>
</gene>
<protein>
    <recommendedName>
        <fullName>Keratin-associated protein 13-4</fullName>
    </recommendedName>
</protein>
<accession>Q4W7G7</accession>